<sequence length="518" mass="57322">MEDKDITSVNEKEVNENTNPRIIKYDAERRATRTETSKKDKWKNIVTIIASGFALISDGYVNGSMSMLNKVFVMEYGKKNYSSKVSTRVSNAALVGIIFGQFFMGIAADYYSRKSCILVATAILVIGSALCAASHGTTVPGMFWMLTVMRGLVGIGVGAEYPTSTLSANESANEYTTTKRGGILVMVTNLPLAFGGPFATIIFLIVYKICSGTKHLEAIWRTVFAIGCFWPLSVFYFRWKTATTEVYEKGRIKRNIPYFLALKFYWKRLLGTCGTWFMYDFVTFPNGIFSSTIISSVIKDQNDLVKVAEWNLLLGVLAVLGVPIGAYLSDRIGRKYTLMFGFSGYIIFGLIIGCAYDQLKKITPLFIIFYAFMNMLGNAGPGDMLGVISSEASATAVRGVFYGLSAVTGKIGSVVGVECFQPIRDNLGARWTFIIAAICGLIGIIITYFFVPHSLESDLMKQDVEFHNYLVSNGWTGKMGFDETDEESMVRTIEVEENGTNCSKKNAEIISVRQVDQS</sequence>
<keyword id="KW-1003">Cell membrane</keyword>
<keyword id="KW-0325">Glycoprotein</keyword>
<keyword id="KW-0472">Membrane</keyword>
<keyword id="KW-1185">Reference proteome</keyword>
<keyword id="KW-0677">Repeat</keyword>
<keyword id="KW-0812">Transmembrane</keyword>
<keyword id="KW-1133">Transmembrane helix</keyword>
<keyword id="KW-0813">Transport</keyword>
<feature type="chain" id="PRO_0000050459" description="Glycerophosphoinositol transporter 1">
    <location>
        <begin position="1"/>
        <end position="518"/>
    </location>
</feature>
<feature type="topological domain" description="Cytoplasmic" evidence="1">
    <location>
        <begin position="1"/>
        <end position="44"/>
    </location>
</feature>
<feature type="transmembrane region" description="Helical; Name=1" evidence="1">
    <location>
        <begin position="45"/>
        <end position="65"/>
    </location>
</feature>
<feature type="topological domain" description="Extracellular" evidence="1">
    <location>
        <begin position="66"/>
        <end position="91"/>
    </location>
</feature>
<feature type="transmembrane region" description="Helical; Name=2" evidence="1">
    <location>
        <begin position="92"/>
        <end position="112"/>
    </location>
</feature>
<feature type="topological domain" description="Cytoplasmic" evidence="1">
    <location>
        <begin position="113"/>
        <end position="114"/>
    </location>
</feature>
<feature type="transmembrane region" description="Helical; Name=3" evidence="1">
    <location>
        <begin position="115"/>
        <end position="136"/>
    </location>
</feature>
<feature type="topological domain" description="Extracellular" evidence="1">
    <location>
        <begin position="137"/>
        <end position="138"/>
    </location>
</feature>
<feature type="transmembrane region" description="Helical; Name=4" evidence="1">
    <location>
        <begin position="139"/>
        <end position="159"/>
    </location>
</feature>
<feature type="topological domain" description="Cytoplasmic" evidence="1">
    <location>
        <begin position="160"/>
        <end position="184"/>
    </location>
</feature>
<feature type="transmembrane region" description="Helical; Name=5" evidence="1">
    <location>
        <begin position="185"/>
        <end position="205"/>
    </location>
</feature>
<feature type="topological domain" description="Extracellular" evidence="1">
    <location>
        <begin position="206"/>
        <end position="216"/>
    </location>
</feature>
<feature type="transmembrane region" description="Helical; Name=6" evidence="1">
    <location>
        <begin position="217"/>
        <end position="237"/>
    </location>
</feature>
<feature type="topological domain" description="Cytoplasmic" evidence="1">
    <location>
        <begin position="238"/>
        <end position="268"/>
    </location>
</feature>
<feature type="transmembrane region" description="Helical; Name=7" evidence="1">
    <location>
        <begin position="269"/>
        <end position="289"/>
    </location>
</feature>
<feature type="topological domain" description="Extracellular" evidence="1">
    <location>
        <begin position="290"/>
        <end position="306"/>
    </location>
</feature>
<feature type="transmembrane region" description="Helical; Name=8" evidence="1">
    <location>
        <begin position="307"/>
        <end position="327"/>
    </location>
</feature>
<feature type="topological domain" description="Cytoplasmic" evidence="1">
    <location>
        <begin position="328"/>
        <end position="335"/>
    </location>
</feature>
<feature type="transmembrane region" description="Helical; Name=9" evidence="1">
    <location>
        <begin position="336"/>
        <end position="356"/>
    </location>
</feature>
<feature type="topological domain" description="Extracellular" evidence="1">
    <location>
        <begin position="357"/>
        <end position="360"/>
    </location>
</feature>
<feature type="transmembrane region" description="Helical; Name=10" evidence="1">
    <location>
        <begin position="361"/>
        <end position="381"/>
    </location>
</feature>
<feature type="topological domain" description="Cytoplasmic" evidence="1">
    <location>
        <begin position="382"/>
        <end position="399"/>
    </location>
</feature>
<feature type="transmembrane region" description="Helical; Name=11" evidence="1">
    <location>
        <begin position="400"/>
        <end position="420"/>
    </location>
</feature>
<feature type="topological domain" description="Extracellular" evidence="1">
    <location>
        <begin position="421"/>
        <end position="430"/>
    </location>
</feature>
<feature type="transmembrane region" description="Helical; Name=12" evidence="1">
    <location>
        <begin position="431"/>
        <end position="451"/>
    </location>
</feature>
<feature type="topological domain" description="Cytoplasmic" evidence="1">
    <location>
        <begin position="452"/>
        <end position="518"/>
    </location>
</feature>
<feature type="glycosylation site" description="N-linked (GlcNAc...) asparagine" evidence="1">
    <location>
        <position position="80"/>
    </location>
</feature>
<protein>
    <recommendedName>
        <fullName evidence="5">Glycerophosphoinositol transporter 1</fullName>
    </recommendedName>
</protein>
<name>GIT1_YEAST</name>
<proteinExistence type="evidence at protein level"/>
<comment type="function">
    <text evidence="2 3 4">Glycerophosphodiester transporter that mediates uptake of both glycerophosphoinositol (GroPIns) and glycerophosphocholine (GroPCho) as sources of the nutrients inositol and phosphate (PubMed:12912892, PubMed:16141200, PubMed:9691030).</text>
</comment>
<comment type="catalytic activity">
    <reaction evidence="3">
        <text>sn-glycerol 3-phosphocholine(out) = sn-glycerol 3-phosphocholine(in)</text>
        <dbReference type="Rhea" id="RHEA:32911"/>
        <dbReference type="ChEBI" id="CHEBI:16870"/>
    </reaction>
    <physiologicalReaction direction="left-to-right" evidence="3">
        <dbReference type="Rhea" id="RHEA:32912"/>
    </physiologicalReaction>
</comment>
<comment type="catalytic activity">
    <reaction evidence="3">
        <text>sn-glycero-3-phospho-1D-myo-inositol(out) = sn-glycero-3-phospho-1D-myo-inositol(in)</text>
        <dbReference type="Rhea" id="RHEA:32915"/>
        <dbReference type="ChEBI" id="CHEBI:58444"/>
    </reaction>
    <physiologicalReaction direction="left-to-right" evidence="3">
        <dbReference type="Rhea" id="RHEA:32916"/>
    </physiologicalReaction>
</comment>
<comment type="subcellular location">
    <subcellularLocation>
        <location evidence="7 8 9">Cell membrane</location>
        <topology evidence="1">Multi-pass membrane protein</topology>
    </subcellularLocation>
</comment>
<comment type="induction">
    <text evidence="2">Both inositol and phosphate regulate GIT1 transcription and expression is positively regulated by the transcription factor PHO4 (PubMed:12912892).</text>
</comment>
<comment type="disruption phenotype">
    <text evidence="3 4">Impairs the uptake of glycerophosphoinositol (GroPIns) (PubMed:9691030). Also impairs the uptake of glycerophosphocholine (GroPCho) (PubMed:9691030).</text>
</comment>
<comment type="similarity">
    <text evidence="6">Belongs to the major facilitator superfamily. Sugar transporter (TC 2.A.1.1) family.</text>
</comment>
<dbReference type="EMBL" id="X59720">
    <property type="protein sequence ID" value="CAA42240.1"/>
    <property type="molecule type" value="Genomic_DNA"/>
</dbReference>
<dbReference type="EMBL" id="BK006937">
    <property type="protein sequence ID" value="DAA07568.1"/>
    <property type="molecule type" value="Genomic_DNA"/>
</dbReference>
<dbReference type="PIR" id="S19514">
    <property type="entry name" value="S19514"/>
</dbReference>
<dbReference type="RefSeq" id="NP_010022.1">
    <property type="nucleotide sequence ID" value="NM_001178805.1"/>
</dbReference>
<dbReference type="SMR" id="P25346"/>
<dbReference type="BioGRID" id="31071">
    <property type="interactions" value="28"/>
</dbReference>
<dbReference type="DIP" id="DIP-4626N"/>
<dbReference type="FunCoup" id="P25346">
    <property type="interactions" value="80"/>
</dbReference>
<dbReference type="IntAct" id="P25346">
    <property type="interactions" value="3"/>
</dbReference>
<dbReference type="MINT" id="P25346"/>
<dbReference type="STRING" id="4932.YCR098C"/>
<dbReference type="SwissLipids" id="SLP:000000076"/>
<dbReference type="TCDB" id="2.A.1.9.7">
    <property type="family name" value="the major facilitator superfamily (mfs)"/>
</dbReference>
<dbReference type="GlyCosmos" id="P25346">
    <property type="glycosylation" value="1 site, No reported glycans"/>
</dbReference>
<dbReference type="GlyGen" id="P25346">
    <property type="glycosylation" value="1 site"/>
</dbReference>
<dbReference type="iPTMnet" id="P25346"/>
<dbReference type="PaxDb" id="4932-YCR098C"/>
<dbReference type="PeptideAtlas" id="P25346"/>
<dbReference type="TopDownProteomics" id="P25346"/>
<dbReference type="EnsemblFungi" id="YCR098C_mRNA">
    <property type="protein sequence ID" value="YCR098C"/>
    <property type="gene ID" value="YCR098C"/>
</dbReference>
<dbReference type="GeneID" id="850462"/>
<dbReference type="KEGG" id="sce:YCR098C"/>
<dbReference type="AGR" id="SGD:S000000695"/>
<dbReference type="SGD" id="S000000695">
    <property type="gene designation" value="GIT1"/>
</dbReference>
<dbReference type="VEuPathDB" id="FungiDB:YCR098C"/>
<dbReference type="eggNOG" id="KOG0252">
    <property type="taxonomic scope" value="Eukaryota"/>
</dbReference>
<dbReference type="HOGENOM" id="CLU_001265_46_12_1"/>
<dbReference type="InParanoid" id="P25346"/>
<dbReference type="OMA" id="RGPIFIL"/>
<dbReference type="OrthoDB" id="2153661at2759"/>
<dbReference type="BioCyc" id="YEAST:G3O-29392-MONOMER"/>
<dbReference type="BioGRID-ORCS" id="850462">
    <property type="hits" value="4 hits in 10 CRISPR screens"/>
</dbReference>
<dbReference type="PRO" id="PR:P25346"/>
<dbReference type="Proteomes" id="UP000002311">
    <property type="component" value="Chromosome III"/>
</dbReference>
<dbReference type="RNAct" id="P25346">
    <property type="molecule type" value="protein"/>
</dbReference>
<dbReference type="GO" id="GO:0071944">
    <property type="term" value="C:cell periphery"/>
    <property type="evidence" value="ECO:0007005"/>
    <property type="project" value="SGD"/>
</dbReference>
<dbReference type="GO" id="GO:0000324">
    <property type="term" value="C:fungal-type vacuole"/>
    <property type="evidence" value="ECO:0007005"/>
    <property type="project" value="SGD"/>
</dbReference>
<dbReference type="GO" id="GO:0005886">
    <property type="term" value="C:plasma membrane"/>
    <property type="evidence" value="ECO:0000314"/>
    <property type="project" value="SGD"/>
</dbReference>
<dbReference type="GO" id="GO:0015169">
    <property type="term" value="F:glycerol-3-phosphate transmembrane transporter activity"/>
    <property type="evidence" value="ECO:0000315"/>
    <property type="project" value="SGD"/>
</dbReference>
<dbReference type="GO" id="GO:0001406">
    <property type="term" value="F:glycerophosphodiester transmembrane transporter activity"/>
    <property type="evidence" value="ECO:0000314"/>
    <property type="project" value="SGD"/>
</dbReference>
<dbReference type="GO" id="GO:0015794">
    <property type="term" value="P:glycerol-3-phosphate transmembrane transport"/>
    <property type="evidence" value="ECO:0000315"/>
    <property type="project" value="SGD"/>
</dbReference>
<dbReference type="GO" id="GO:0001407">
    <property type="term" value="P:glycerophosphodiester transmembrane transport"/>
    <property type="evidence" value="ECO:0000314"/>
    <property type="project" value="SGD"/>
</dbReference>
<dbReference type="GO" id="GO:0055085">
    <property type="term" value="P:transmembrane transport"/>
    <property type="evidence" value="ECO:0000315"/>
    <property type="project" value="SGD"/>
</dbReference>
<dbReference type="CDD" id="cd17364">
    <property type="entry name" value="MFS_PhT"/>
    <property type="match status" value="1"/>
</dbReference>
<dbReference type="FunFam" id="1.20.1250.20:FF:000140">
    <property type="entry name" value="Putative MFS phospholipid transporter"/>
    <property type="match status" value="1"/>
</dbReference>
<dbReference type="Gene3D" id="1.20.1250.20">
    <property type="entry name" value="MFS general substrate transporter like domains"/>
    <property type="match status" value="1"/>
</dbReference>
<dbReference type="InterPro" id="IPR020846">
    <property type="entry name" value="MFS_dom"/>
</dbReference>
<dbReference type="InterPro" id="IPR005828">
    <property type="entry name" value="MFS_sugar_transport-like"/>
</dbReference>
<dbReference type="InterPro" id="IPR036259">
    <property type="entry name" value="MFS_trans_sf"/>
</dbReference>
<dbReference type="InterPro" id="IPR005829">
    <property type="entry name" value="Sugar_transporter_CS"/>
</dbReference>
<dbReference type="PANTHER" id="PTHR23508">
    <property type="entry name" value="CARBOXYLIC ACID TRANSPORTER PROTEIN HOMOLOG"/>
    <property type="match status" value="1"/>
</dbReference>
<dbReference type="PANTHER" id="PTHR23508:SF10">
    <property type="entry name" value="CARBOXYLIC ACID TRANSPORTER PROTEIN HOMOLOG"/>
    <property type="match status" value="1"/>
</dbReference>
<dbReference type="Pfam" id="PF00083">
    <property type="entry name" value="Sugar_tr"/>
    <property type="match status" value="1"/>
</dbReference>
<dbReference type="SUPFAM" id="SSF103473">
    <property type="entry name" value="MFS general substrate transporter"/>
    <property type="match status" value="1"/>
</dbReference>
<dbReference type="PROSITE" id="PS50850">
    <property type="entry name" value="MFS"/>
    <property type="match status" value="1"/>
</dbReference>
<dbReference type="PROSITE" id="PS00216">
    <property type="entry name" value="SUGAR_TRANSPORT_1"/>
    <property type="match status" value="1"/>
</dbReference>
<reference key="1">
    <citation type="journal article" date="1992" name="Yeast">
        <title>Sequence of the HMR region on chromosome III of Saccharomyces cerevisiae.</title>
        <authorList>
            <person name="Sor F."/>
            <person name="Cheret G."/>
            <person name="Fabre F."/>
            <person name="Faye G."/>
            <person name="Fukuhara H."/>
        </authorList>
    </citation>
    <scope>NUCLEOTIDE SEQUENCE [GENOMIC DNA]</scope>
</reference>
<reference key="2">
    <citation type="journal article" date="1992" name="Nature">
        <title>The complete DNA sequence of yeast chromosome III.</title>
        <authorList>
            <person name="Oliver S.G."/>
            <person name="van der Aart Q.J.M."/>
            <person name="Agostoni-Carbone M.L."/>
            <person name="Aigle M."/>
            <person name="Alberghina L."/>
            <person name="Alexandraki D."/>
            <person name="Antoine G."/>
            <person name="Anwar R."/>
            <person name="Ballesta J.P.G."/>
            <person name="Benit P."/>
            <person name="Berben G."/>
            <person name="Bergantino E."/>
            <person name="Biteau N."/>
            <person name="Bolle P.-A."/>
            <person name="Bolotin-Fukuhara M."/>
            <person name="Brown A."/>
            <person name="Brown A.J.P."/>
            <person name="Buhler J.-M."/>
            <person name="Carcano C."/>
            <person name="Carignani G."/>
            <person name="Cederberg H."/>
            <person name="Chanet R."/>
            <person name="Contreras R."/>
            <person name="Crouzet M."/>
            <person name="Daignan-Fornier B."/>
            <person name="Defoor E."/>
            <person name="Delgado M.D."/>
            <person name="Demolder J."/>
            <person name="Doira C."/>
            <person name="Dubois E."/>
            <person name="Dujon B."/>
            <person name="Duesterhoeft A."/>
            <person name="Erdmann D."/>
            <person name="Esteban M."/>
            <person name="Fabre F."/>
            <person name="Fairhead C."/>
            <person name="Faye G."/>
            <person name="Feldmann H."/>
            <person name="Fiers W."/>
            <person name="Francingues-Gaillard M.-C."/>
            <person name="Franco L."/>
            <person name="Frontali L."/>
            <person name="Fukuhara H."/>
            <person name="Fuller L.J."/>
            <person name="Galland P."/>
            <person name="Gent M.E."/>
            <person name="Gigot D."/>
            <person name="Gilliquet V."/>
            <person name="Glansdorff N."/>
            <person name="Goffeau A."/>
            <person name="Grenson M."/>
            <person name="Grisanti P."/>
            <person name="Grivell L.A."/>
            <person name="de Haan M."/>
            <person name="Haasemann M."/>
            <person name="Hatat D."/>
            <person name="Hoenicka J."/>
            <person name="Hegemann J.H."/>
            <person name="Herbert C.J."/>
            <person name="Hilger F."/>
            <person name="Hohmann S."/>
            <person name="Hollenberg C.P."/>
            <person name="Huse K."/>
            <person name="Iborra F."/>
            <person name="Indge K.J."/>
            <person name="Isono K."/>
            <person name="Jacq C."/>
            <person name="Jacquet M."/>
            <person name="James C.M."/>
            <person name="Jauniaux J.-C."/>
            <person name="Jia Y."/>
            <person name="Jimenez A."/>
            <person name="Kelly A."/>
            <person name="Kleinhans U."/>
            <person name="Kreisl P."/>
            <person name="Lanfranchi G."/>
            <person name="Lewis C."/>
            <person name="van der Linden C.G."/>
            <person name="Lucchini G."/>
            <person name="Lutzenkirchen K."/>
            <person name="Maat M.J."/>
            <person name="Mallet L."/>
            <person name="Mannhaupt G."/>
            <person name="Martegani E."/>
            <person name="Mathieu A."/>
            <person name="Maurer C.T.C."/>
            <person name="McConnell D."/>
            <person name="McKee R.A."/>
            <person name="Messenguy F."/>
            <person name="Mewes H.-W."/>
            <person name="Molemans F."/>
            <person name="Montague M.A."/>
            <person name="Muzi Falconi M."/>
            <person name="Navas L."/>
            <person name="Newlon C.S."/>
            <person name="Noone D."/>
            <person name="Pallier C."/>
            <person name="Panzeri L."/>
            <person name="Pearson B.M."/>
            <person name="Perea J."/>
            <person name="Philippsen P."/>
            <person name="Pierard A."/>
            <person name="Planta R.J."/>
            <person name="Plevani P."/>
            <person name="Poetsch B."/>
            <person name="Pohl F.M."/>
            <person name="Purnelle B."/>
            <person name="Ramezani Rad M."/>
            <person name="Rasmussen S.W."/>
            <person name="Raynal A."/>
            <person name="Remacha M.A."/>
            <person name="Richterich P."/>
            <person name="Roberts A.B."/>
            <person name="Rodriguez F."/>
            <person name="Sanz E."/>
            <person name="Schaaff-Gerstenschlaeger I."/>
            <person name="Scherens B."/>
            <person name="Schweitzer B."/>
            <person name="Shu Y."/>
            <person name="Skala J."/>
            <person name="Slonimski P.P."/>
            <person name="Sor F."/>
            <person name="Soustelle C."/>
            <person name="Spiegelberg R."/>
            <person name="Stateva L.I."/>
            <person name="Steensma H.Y."/>
            <person name="Steiner S."/>
            <person name="Thierry A."/>
            <person name="Thireos G."/>
            <person name="Tzermia M."/>
            <person name="Urrestarazu L.A."/>
            <person name="Valle G."/>
            <person name="Vetter I."/>
            <person name="van Vliet-Reedijk J.C."/>
            <person name="Voet M."/>
            <person name="Volckaert G."/>
            <person name="Vreken P."/>
            <person name="Wang H."/>
            <person name="Warmington J.R."/>
            <person name="von Wettstein D."/>
            <person name="Wicksteed B.L."/>
            <person name="Wilson C."/>
            <person name="Wurst H."/>
            <person name="Xu G."/>
            <person name="Yoshikawa A."/>
            <person name="Zimmermann F.K."/>
            <person name="Sgouros J.G."/>
        </authorList>
    </citation>
    <scope>NUCLEOTIDE SEQUENCE [LARGE SCALE GENOMIC DNA]</scope>
    <source>
        <strain>ATCC 204508 / S288c</strain>
    </source>
</reference>
<reference key="3">
    <citation type="journal article" date="2014" name="G3 (Bethesda)">
        <title>The reference genome sequence of Saccharomyces cerevisiae: Then and now.</title>
        <authorList>
            <person name="Engel S.R."/>
            <person name="Dietrich F.S."/>
            <person name="Fisk D.G."/>
            <person name="Binkley G."/>
            <person name="Balakrishnan R."/>
            <person name="Costanzo M.C."/>
            <person name="Dwight S.S."/>
            <person name="Hitz B.C."/>
            <person name="Karra K."/>
            <person name="Nash R.S."/>
            <person name="Weng S."/>
            <person name="Wong E.D."/>
            <person name="Lloyd P."/>
            <person name="Skrzypek M.S."/>
            <person name="Miyasato S.R."/>
            <person name="Simison M."/>
            <person name="Cherry J.M."/>
        </authorList>
    </citation>
    <scope>GENOME REANNOTATION</scope>
    <source>
        <strain>ATCC 204508 / S288c</strain>
    </source>
</reference>
<reference key="4">
    <citation type="journal article" date="1998" name="Genetics">
        <title>GIT1, a gene encoding a novel transporter for glycerophosphoinositol in Saccharomyces cerevisiae.</title>
        <authorList>
            <person name="Patton-Vogt J.L."/>
            <person name="Henry S.A."/>
        </authorList>
    </citation>
    <scope>FUNCTION</scope>
    <scope>DISRUPTION PHENOTYPE</scope>
</reference>
<reference key="5">
    <citation type="journal article" date="2003" name="Eukaryot. Cell">
        <title>Inositol and phosphate regulate GIT1 transcription and glycerophosphoinositol incorporation in Saccharomyces cerevisiae.</title>
        <authorList>
            <person name="Almaguer C."/>
            <person name="Mantella D."/>
            <person name="Perez E."/>
            <person name="Patton-Vogt J."/>
        </authorList>
    </citation>
    <scope>FUNCTION</scope>
    <scope>INDUCTION</scope>
</reference>
<reference key="6">
    <citation type="journal article" date="2005" name="J. Biol. Chem.">
        <title>Glycerophosphocholine-dependent growth requires Gde1p (YPL110c) and Git1p in Saccharomyces cerevisiae.</title>
        <authorList>
            <person name="Fisher E."/>
            <person name="Almaguer C."/>
            <person name="Holic R."/>
            <person name="Griac P."/>
            <person name="Patton-Vogt J."/>
        </authorList>
    </citation>
    <scope>FUNCTION</scope>
    <scope>CATALYTIC ACTIVITY</scope>
    <scope>DISRUPTION PHENOTYPE</scope>
</reference>
<reference key="7">
    <citation type="journal article" date="2006" name="Proc. Natl. Acad. Sci. U.S.A.">
        <title>A global topology map of the Saccharomyces cerevisiae membrane proteome.</title>
        <authorList>
            <person name="Kim H."/>
            <person name="Melen K."/>
            <person name="Oesterberg M."/>
            <person name="von Heijne G."/>
        </authorList>
    </citation>
    <scope>TOPOLOGY [LARGE SCALE ANALYSIS]</scope>
    <source>
        <strain>ATCC 208353 / W303-1A</strain>
    </source>
</reference>
<reference key="8">
    <citation type="journal article" date="2009" name="Science">
        <title>Global analysis of Cdk1 substrate phosphorylation sites provides insights into evolution.</title>
        <authorList>
            <person name="Holt L.J."/>
            <person name="Tuch B.B."/>
            <person name="Villen J."/>
            <person name="Johnson A.D."/>
            <person name="Gygi S.P."/>
            <person name="Morgan D.O."/>
        </authorList>
    </citation>
    <scope>IDENTIFICATION BY MASS SPECTROMETRY [LARGE SCALE ANALYSIS]</scope>
</reference>
<evidence type="ECO:0000255" key="1"/>
<evidence type="ECO:0000269" key="2">
    <source>
    </source>
</evidence>
<evidence type="ECO:0000269" key="3">
    <source>
    </source>
</evidence>
<evidence type="ECO:0000269" key="4">
    <source>
    </source>
</evidence>
<evidence type="ECO:0000303" key="5">
    <source>
    </source>
</evidence>
<evidence type="ECO:0000305" key="6"/>
<evidence type="ECO:0000305" key="7">
    <source>
    </source>
</evidence>
<evidence type="ECO:0000305" key="8">
    <source>
    </source>
</evidence>
<evidence type="ECO:0000305" key="9">
    <source>
    </source>
</evidence>
<organism>
    <name type="scientific">Saccharomyces cerevisiae (strain ATCC 204508 / S288c)</name>
    <name type="common">Baker's yeast</name>
    <dbReference type="NCBI Taxonomy" id="559292"/>
    <lineage>
        <taxon>Eukaryota</taxon>
        <taxon>Fungi</taxon>
        <taxon>Dikarya</taxon>
        <taxon>Ascomycota</taxon>
        <taxon>Saccharomycotina</taxon>
        <taxon>Saccharomycetes</taxon>
        <taxon>Saccharomycetales</taxon>
        <taxon>Saccharomycetaceae</taxon>
        <taxon>Saccharomyces</taxon>
    </lineage>
</organism>
<accession>P25346</accession>
<accession>D6VR99</accession>
<gene>
    <name evidence="5" type="primary">GIT1</name>
    <name type="ordered locus">YCR098C</name>
    <name type="ORF">YCR137</name>
    <name type="ORF">YCR98C</name>
</gene>